<reference key="1">
    <citation type="journal article" date="2008" name="Syst. Biol.">
        <title>Branch lengths, support, and congruence: testing the phylogenomic approach with 20 nuclear loci in snakes.</title>
        <authorList>
            <person name="Wiens J.J."/>
            <person name="Kuczynski C.A."/>
            <person name="Smith S.A."/>
            <person name="Mulcahy D.G."/>
            <person name="Sites J.W. Jr."/>
            <person name="Townsend T.M."/>
            <person name="Reeder T.W."/>
        </authorList>
    </citation>
    <scope>NUCLEOTIDE SEQUENCE [GENOMIC DNA]</scope>
</reference>
<reference key="2">
    <citation type="journal article" date="2011" name="Toxicon">
        <title>Molecular diversity of snake venom nerve growth factors.</title>
        <authorList>
            <person name="Trummal K."/>
            <person name="Tonismagi K."/>
            <person name="Paalme V."/>
            <person name="Jarvekulg L."/>
            <person name="Siigur J."/>
            <person name="Siigur E."/>
        </authorList>
    </citation>
    <scope>CHARACTERIZATION</scope>
    <scope>GLYCOSYLATION</scope>
    <source>
        <tissue>Venom</tissue>
    </source>
</reference>
<sequence length="190" mass="21385">FLIGIWAAPKSEDNVPLGSPATSDLSDTSCAKTHEALKTSRNIDQHYPAPKKAEDQEFGSAANIIVDPKLFQKRRFQSPRVLFSTQPPPLSRDEQNVDNANSLNRNIRAKREDHPVHNRGEYSVCDSVNVWVANKTTATDIRGNVVTVMVDVNINNNVYKQYFFETKCRNPNPVPTGCRGIDARHWNSYC</sequence>
<feature type="signal peptide" evidence="4">
    <location>
        <begin position="1" status="less than"/>
        <end position="7"/>
    </location>
</feature>
<feature type="propeptide" id="PRO_0000425460" evidence="1">
    <location>
        <begin position="8"/>
        <end position="111"/>
    </location>
</feature>
<feature type="chain" id="PRO_0000425461" description="Venom nerve growth factor">
    <location>
        <begin position="112"/>
        <end position="190" status="greater than"/>
    </location>
</feature>
<feature type="glycosylation site" description="N-linked (GlcNAc...) asparagine" evidence="4">
    <location>
        <position position="134"/>
    </location>
</feature>
<feature type="disulfide bond" evidence="2">
    <location>
        <begin position="125"/>
        <end position="190"/>
    </location>
</feature>
<feature type="non-terminal residue">
    <location>
        <position position="1"/>
    </location>
</feature>
<feature type="non-terminal residue">
    <location>
        <position position="190"/>
    </location>
</feature>
<evidence type="ECO:0000250" key="1"/>
<evidence type="ECO:0000250" key="2">
    <source>
        <dbReference type="UniProtKB" id="P61898"/>
    </source>
</evidence>
<evidence type="ECO:0000250" key="3">
    <source>
        <dbReference type="UniProtKB" id="P61899"/>
    </source>
</evidence>
<evidence type="ECO:0000255" key="4"/>
<evidence type="ECO:0000269" key="5">
    <source>
    </source>
</evidence>
<evidence type="ECO:0000305" key="6"/>
<evidence type="ECO:0000305" key="7">
    <source>
    </source>
</evidence>
<dbReference type="EMBL" id="EU437986">
    <property type="protein sequence ID" value="ACC85799.1"/>
    <property type="molecule type" value="Genomic_DNA"/>
</dbReference>
<dbReference type="GO" id="GO:0030424">
    <property type="term" value="C:axon"/>
    <property type="evidence" value="ECO:0007669"/>
    <property type="project" value="TreeGrafter"/>
</dbReference>
<dbReference type="GO" id="GO:0030425">
    <property type="term" value="C:dendrite"/>
    <property type="evidence" value="ECO:0007669"/>
    <property type="project" value="TreeGrafter"/>
</dbReference>
<dbReference type="GO" id="GO:0005615">
    <property type="term" value="C:extracellular space"/>
    <property type="evidence" value="ECO:0007669"/>
    <property type="project" value="TreeGrafter"/>
</dbReference>
<dbReference type="GO" id="GO:0008021">
    <property type="term" value="C:synaptic vesicle"/>
    <property type="evidence" value="ECO:0007669"/>
    <property type="project" value="TreeGrafter"/>
</dbReference>
<dbReference type="GO" id="GO:0008083">
    <property type="term" value="F:growth factor activity"/>
    <property type="evidence" value="ECO:0007669"/>
    <property type="project" value="UniProtKB-KW"/>
</dbReference>
<dbReference type="GO" id="GO:0008289">
    <property type="term" value="F:lipid binding"/>
    <property type="evidence" value="ECO:0007669"/>
    <property type="project" value="UniProtKB-KW"/>
</dbReference>
<dbReference type="GO" id="GO:0005163">
    <property type="term" value="F:nerve growth factor receptor binding"/>
    <property type="evidence" value="ECO:0007669"/>
    <property type="project" value="TreeGrafter"/>
</dbReference>
<dbReference type="GO" id="GO:0030414">
    <property type="term" value="F:peptidase inhibitor activity"/>
    <property type="evidence" value="ECO:0007669"/>
    <property type="project" value="UniProtKB-KW"/>
</dbReference>
<dbReference type="GO" id="GO:0090729">
    <property type="term" value="F:toxin activity"/>
    <property type="evidence" value="ECO:0007669"/>
    <property type="project" value="UniProtKB-KW"/>
</dbReference>
<dbReference type="GO" id="GO:0007169">
    <property type="term" value="P:cell surface receptor protein tyrosine kinase signaling pathway"/>
    <property type="evidence" value="ECO:0007669"/>
    <property type="project" value="TreeGrafter"/>
</dbReference>
<dbReference type="GO" id="GO:0050804">
    <property type="term" value="P:modulation of chemical synaptic transmission"/>
    <property type="evidence" value="ECO:0007669"/>
    <property type="project" value="TreeGrafter"/>
</dbReference>
<dbReference type="GO" id="GO:0043524">
    <property type="term" value="P:negative regulation of neuron apoptotic process"/>
    <property type="evidence" value="ECO:0007669"/>
    <property type="project" value="TreeGrafter"/>
</dbReference>
<dbReference type="GO" id="GO:0021675">
    <property type="term" value="P:nerve development"/>
    <property type="evidence" value="ECO:0007669"/>
    <property type="project" value="TreeGrafter"/>
</dbReference>
<dbReference type="GO" id="GO:0038180">
    <property type="term" value="P:nerve growth factor signaling pathway"/>
    <property type="evidence" value="ECO:0007669"/>
    <property type="project" value="TreeGrafter"/>
</dbReference>
<dbReference type="GO" id="GO:0048812">
    <property type="term" value="P:neuron projection morphogenesis"/>
    <property type="evidence" value="ECO:0007669"/>
    <property type="project" value="TreeGrafter"/>
</dbReference>
<dbReference type="Gene3D" id="2.10.90.10">
    <property type="entry name" value="Cystine-knot cytokines"/>
    <property type="match status" value="1"/>
</dbReference>
<dbReference type="InterPro" id="IPR029034">
    <property type="entry name" value="Cystine-knot_cytokine"/>
</dbReference>
<dbReference type="InterPro" id="IPR020408">
    <property type="entry name" value="Nerve_growth_factor-like"/>
</dbReference>
<dbReference type="InterPro" id="IPR002072">
    <property type="entry name" value="Nerve_growth_factor-rel"/>
</dbReference>
<dbReference type="InterPro" id="IPR020425">
    <property type="entry name" value="Nerve_growth_factor_bsu"/>
</dbReference>
<dbReference type="InterPro" id="IPR019846">
    <property type="entry name" value="Nerve_growth_factor_CS"/>
</dbReference>
<dbReference type="InterPro" id="IPR020433">
    <property type="entry name" value="Venom_nerve_growth_factor"/>
</dbReference>
<dbReference type="PANTHER" id="PTHR11589:SF10">
    <property type="entry name" value="BETA-NERVE GROWTH FACTOR"/>
    <property type="match status" value="1"/>
</dbReference>
<dbReference type="PANTHER" id="PTHR11589">
    <property type="entry name" value="NERVE GROWTH FACTOR NGF -RELATED"/>
    <property type="match status" value="1"/>
</dbReference>
<dbReference type="Pfam" id="PF00243">
    <property type="entry name" value="NGF"/>
    <property type="match status" value="1"/>
</dbReference>
<dbReference type="PIRSF" id="PIRSF001789">
    <property type="entry name" value="NGF"/>
    <property type="match status" value="1"/>
</dbReference>
<dbReference type="PRINTS" id="PR00268">
    <property type="entry name" value="NGF"/>
</dbReference>
<dbReference type="PRINTS" id="PR01913">
    <property type="entry name" value="NGFBETA"/>
</dbReference>
<dbReference type="PRINTS" id="PR01917">
    <property type="entry name" value="VENOMNGF"/>
</dbReference>
<dbReference type="SMART" id="SM00140">
    <property type="entry name" value="NGF"/>
    <property type="match status" value="1"/>
</dbReference>
<dbReference type="SUPFAM" id="SSF57501">
    <property type="entry name" value="Cystine-knot cytokines"/>
    <property type="match status" value="1"/>
</dbReference>
<dbReference type="PROSITE" id="PS00248">
    <property type="entry name" value="NGF_1"/>
    <property type="match status" value="1"/>
</dbReference>
<dbReference type="PROSITE" id="PS50270">
    <property type="entry name" value="NGF_2"/>
    <property type="match status" value="1"/>
</dbReference>
<name>NGFV_AGKCO</name>
<keyword id="KW-0165">Cleavage on pair of basic residues</keyword>
<keyword id="KW-1015">Disulfide bond</keyword>
<keyword id="KW-0325">Glycoprotein</keyword>
<keyword id="KW-0339">Growth factor</keyword>
<keyword id="KW-0446">Lipid-binding</keyword>
<keyword id="KW-0481">Metalloenzyme inhibitor</keyword>
<keyword id="KW-0483">Metalloprotease inhibitor</keyword>
<keyword id="KW-0646">Protease inhibitor</keyword>
<keyword id="KW-0964">Secreted</keyword>
<keyword id="KW-0732">Signal</keyword>
<keyword id="KW-0800">Toxin</keyword>
<proteinExistence type="evidence at protein level"/>
<protein>
    <recommendedName>
        <fullName>Venom nerve growth factor</fullName>
        <shortName>v-NGF</shortName>
        <shortName>vNGF</shortName>
    </recommendedName>
</protein>
<accession>B8QCG6</accession>
<comment type="function">
    <text evidence="2 3">Nerve growth factor is important for the development and maintenance of the sympathetic and sensory nervous systems. It stimulates division and differentiation of sympathetic and embryonic sensory neurons as well as basal forebrain cholinergic neurons in the brain. Its relevance in the snake venom is not clear. However, it has been shown to inhibit metalloproteinase-dependent proteolysis of platelet glycoprotein Ib alpha, suggesting a metalloproteinase inhibition to prevent metalloprotease autodigestion and/or protection against prey proteases (By similarity). Binds a lipid between the two protein chains in the homodimer. The lipid-bound form promotes histamine relase from mouse mast cells, contrary to the lipid-free form (By similarity).</text>
</comment>
<comment type="subunit">
    <text evidence="2">Homodimer; non-covalently linked.</text>
</comment>
<comment type="subcellular location">
    <subcellularLocation>
        <location evidence="5">Secreted</location>
    </subcellularLocation>
</comment>
<comment type="tissue specificity">
    <text evidence="7">Expressed by the venom gland.</text>
</comment>
<comment type="PTM">
    <text evidence="5">Glycosylated.</text>
</comment>
<comment type="similarity">
    <text evidence="6">Belongs to the NGF-beta family.</text>
</comment>
<organism>
    <name type="scientific">Agkistrodon contortrix contortrix</name>
    <name type="common">Southern copperhead</name>
    <dbReference type="NCBI Taxonomy" id="8713"/>
    <lineage>
        <taxon>Eukaryota</taxon>
        <taxon>Metazoa</taxon>
        <taxon>Chordata</taxon>
        <taxon>Craniata</taxon>
        <taxon>Vertebrata</taxon>
        <taxon>Euteleostomi</taxon>
        <taxon>Lepidosauria</taxon>
        <taxon>Squamata</taxon>
        <taxon>Bifurcata</taxon>
        <taxon>Unidentata</taxon>
        <taxon>Episquamata</taxon>
        <taxon>Toxicofera</taxon>
        <taxon>Serpentes</taxon>
        <taxon>Colubroidea</taxon>
        <taxon>Viperidae</taxon>
        <taxon>Crotalinae</taxon>
        <taxon>Agkistrodon</taxon>
    </lineage>
</organism>